<name>Y1257_HAEIN</name>
<sequence length="57" mass="6549">MTEQAAKPKGWFKRALEKYDNFIKEWGLDQPNCSCVPMSATEDENGNLKKKESSLKK</sequence>
<gene>
    <name type="ordered locus">HI_1257</name>
</gene>
<organism>
    <name type="scientific">Haemophilus influenzae (strain ATCC 51907 / DSM 11121 / KW20 / Rd)</name>
    <dbReference type="NCBI Taxonomy" id="71421"/>
    <lineage>
        <taxon>Bacteria</taxon>
        <taxon>Pseudomonadati</taxon>
        <taxon>Pseudomonadota</taxon>
        <taxon>Gammaproteobacteria</taxon>
        <taxon>Pasteurellales</taxon>
        <taxon>Pasteurellaceae</taxon>
        <taxon>Haemophilus</taxon>
    </lineage>
</organism>
<protein>
    <recommendedName>
        <fullName>Uncharacterized protein HI_1257</fullName>
    </recommendedName>
</protein>
<feature type="chain" id="PRO_0000078017" description="Uncharacterized protein HI_1257">
    <location>
        <begin position="1"/>
        <end position="57"/>
    </location>
</feature>
<keyword id="KW-1185">Reference proteome</keyword>
<reference key="1">
    <citation type="journal article" date="1995" name="Science">
        <title>Whole-genome random sequencing and assembly of Haemophilus influenzae Rd.</title>
        <authorList>
            <person name="Fleischmann R.D."/>
            <person name="Adams M.D."/>
            <person name="White O."/>
            <person name="Clayton R.A."/>
            <person name="Kirkness E.F."/>
            <person name="Kerlavage A.R."/>
            <person name="Bult C.J."/>
            <person name="Tomb J.-F."/>
            <person name="Dougherty B.A."/>
            <person name="Merrick J.M."/>
            <person name="McKenney K."/>
            <person name="Sutton G.G."/>
            <person name="FitzHugh W."/>
            <person name="Fields C.A."/>
            <person name="Gocayne J.D."/>
            <person name="Scott J.D."/>
            <person name="Shirley R."/>
            <person name="Liu L.-I."/>
            <person name="Glodek A."/>
            <person name="Kelley J.M."/>
            <person name="Weidman J.F."/>
            <person name="Phillips C.A."/>
            <person name="Spriggs T."/>
            <person name="Hedblom E."/>
            <person name="Cotton M.D."/>
            <person name="Utterback T.R."/>
            <person name="Hanna M.C."/>
            <person name="Nguyen D.T."/>
            <person name="Saudek D.M."/>
            <person name="Brandon R.C."/>
            <person name="Fine L.D."/>
            <person name="Fritchman J.L."/>
            <person name="Fuhrmann J.L."/>
            <person name="Geoghagen N.S.M."/>
            <person name="Gnehm C.L."/>
            <person name="McDonald L.A."/>
            <person name="Small K.V."/>
            <person name="Fraser C.M."/>
            <person name="Smith H.O."/>
            <person name="Venter J.C."/>
        </authorList>
    </citation>
    <scope>NUCLEOTIDE SEQUENCE [LARGE SCALE GENOMIC DNA]</scope>
    <source>
        <strain>ATCC 51907 / DSM 11121 / KW20 / Rd</strain>
    </source>
</reference>
<dbReference type="EMBL" id="L42023">
    <property type="protein sequence ID" value="AAC22912.1"/>
    <property type="molecule type" value="Genomic_DNA"/>
</dbReference>
<dbReference type="PIR" id="H64023">
    <property type="entry name" value="H64023"/>
</dbReference>
<dbReference type="SMR" id="P44143"/>
<dbReference type="STRING" id="71421.HI_1257"/>
<dbReference type="EnsemblBacteria" id="AAC22912">
    <property type="protein sequence ID" value="AAC22912"/>
    <property type="gene ID" value="HI_1257"/>
</dbReference>
<dbReference type="KEGG" id="hin:HI_1257"/>
<dbReference type="HOGENOM" id="CLU_206292_0_1_6"/>
<dbReference type="Proteomes" id="UP000000579">
    <property type="component" value="Chromosome"/>
</dbReference>
<dbReference type="InterPro" id="IPR035292">
    <property type="entry name" value="DUF5363"/>
</dbReference>
<dbReference type="Pfam" id="PF17320">
    <property type="entry name" value="DUF5363"/>
    <property type="match status" value="1"/>
</dbReference>
<accession>P44143</accession>
<proteinExistence type="predicted"/>